<name>SC5AA_BOVIN</name>
<proteinExistence type="evidence at transcript level"/>
<comment type="function">
    <text evidence="1 2">Electrogenic Na+-coupled sugar symporter that actively transports D-mannose or D-fructose at the plasma membrane, with a Na+ to sugar coupling ratio of 1:1. Transporter activity is driven by a transmembrane Na+ electrochemical gradient set by the Na+/K+ pump. Exclusively recognizes sugar substrates having a pyranose ring with an axial hydroxyl group on carbon 2 (By similarity). Has likely evolved to enable renal reabsorption of D-mannose, an important constituent of oligosaccharide chains of glycoproteins. Contributes to dietary D-fructose reabsorption from glomerular filtrate across the brush border of the kidney (By similarity).</text>
</comment>
<comment type="catalytic activity">
    <reaction evidence="1 2">
        <text>D-mannose(out) + Na(+)(out) = D-mannose(in) + Na(+)(in)</text>
        <dbReference type="Rhea" id="RHEA:72907"/>
        <dbReference type="ChEBI" id="CHEBI:4208"/>
        <dbReference type="ChEBI" id="CHEBI:29101"/>
    </reaction>
    <physiologicalReaction direction="left-to-right" evidence="2">
        <dbReference type="Rhea" id="RHEA:72908"/>
    </physiologicalReaction>
</comment>
<comment type="catalytic activity">
    <reaction evidence="1 2">
        <text>D-fructopyranose(out) + Na(+)(out) = D-fructopyranose(in) + Na(+)(in)</text>
        <dbReference type="Rhea" id="RHEA:72915"/>
        <dbReference type="ChEBI" id="CHEBI:29101"/>
        <dbReference type="ChEBI" id="CHEBI:37714"/>
    </reaction>
    <physiologicalReaction direction="left-to-right" evidence="2">
        <dbReference type="Rhea" id="RHEA:72916"/>
    </physiologicalReaction>
</comment>
<comment type="subcellular location">
    <subcellularLocation>
        <location evidence="2">Apical cell membrane</location>
        <topology evidence="3">Multi-pass membrane protein</topology>
    </subcellularLocation>
</comment>
<comment type="tissue specificity">
    <text evidence="4">Predominantyl expressed in kidney. Also detected at very low levels in testes, skeletal muscle, and spleen.</text>
</comment>
<comment type="similarity">
    <text evidence="5">Belongs to the sodium:solute symporter (SSF) (TC 2.A.21) family.</text>
</comment>
<evidence type="ECO:0000250" key="1">
    <source>
        <dbReference type="UniProtKB" id="A0PJK1"/>
    </source>
</evidence>
<evidence type="ECO:0000250" key="2">
    <source>
        <dbReference type="UniProtKB" id="Q5SWY8"/>
    </source>
</evidence>
<evidence type="ECO:0000255" key="3"/>
<evidence type="ECO:0000269" key="4">
    <source>
    </source>
</evidence>
<evidence type="ECO:0000305" key="5"/>
<organism>
    <name type="scientific">Bos taurus</name>
    <name type="common">Bovine</name>
    <dbReference type="NCBI Taxonomy" id="9913"/>
    <lineage>
        <taxon>Eukaryota</taxon>
        <taxon>Metazoa</taxon>
        <taxon>Chordata</taxon>
        <taxon>Craniata</taxon>
        <taxon>Vertebrata</taxon>
        <taxon>Euteleostomi</taxon>
        <taxon>Mammalia</taxon>
        <taxon>Eutheria</taxon>
        <taxon>Laurasiatheria</taxon>
        <taxon>Artiodactyla</taxon>
        <taxon>Ruminantia</taxon>
        <taxon>Pecora</taxon>
        <taxon>Bovidae</taxon>
        <taxon>Bovinae</taxon>
        <taxon>Bos</taxon>
    </lineage>
</organism>
<protein>
    <recommendedName>
        <fullName evidence="1">Sodium/mannose cotransporter SLC5A10</fullName>
    </recommendedName>
    <alternativeName>
        <fullName>Sodium/glucose cotransporter 5</fullName>
        <shortName>Na(+)/glucose cotransporter 5</shortName>
    </alternativeName>
    <alternativeName>
        <fullName>Solute carrier family 5 member 10</fullName>
    </alternativeName>
</protein>
<dbReference type="EMBL" id="AY514442">
    <property type="protein sequence ID" value="AAS07045.1"/>
    <property type="molecule type" value="mRNA"/>
</dbReference>
<dbReference type="RefSeq" id="NP_001001442.1">
    <property type="nucleotide sequence ID" value="NM_001001442.1"/>
</dbReference>
<dbReference type="SMR" id="Q6R4Q5"/>
<dbReference type="FunCoup" id="Q6R4Q5">
    <property type="interactions" value="41"/>
</dbReference>
<dbReference type="STRING" id="9913.ENSBTAP00000067892"/>
<dbReference type="GlyCosmos" id="Q6R4Q5">
    <property type="glycosylation" value="2 sites, No reported glycans"/>
</dbReference>
<dbReference type="GlyGen" id="Q6R4Q5">
    <property type="glycosylation" value="2 sites"/>
</dbReference>
<dbReference type="PaxDb" id="9913-ENSBTAP00000004823"/>
<dbReference type="Ensembl" id="ENSBTAT00000004823.3">
    <property type="protein sequence ID" value="ENSBTAP00000004823.2"/>
    <property type="gene ID" value="ENSBTAG00000003700.6"/>
</dbReference>
<dbReference type="GeneID" id="407227"/>
<dbReference type="KEGG" id="bta:407227"/>
<dbReference type="CTD" id="125206"/>
<dbReference type="VEuPathDB" id="HostDB:ENSBTAG00000003700"/>
<dbReference type="VGNC" id="VGNC:34903">
    <property type="gene designation" value="SLC5A10"/>
</dbReference>
<dbReference type="eggNOG" id="KOG2349">
    <property type="taxonomic scope" value="Eukaryota"/>
</dbReference>
<dbReference type="GeneTree" id="ENSGT00940000159416"/>
<dbReference type="HOGENOM" id="CLU_018808_9_2_1"/>
<dbReference type="InParanoid" id="Q6R4Q5"/>
<dbReference type="OMA" id="LFGGMWS"/>
<dbReference type="OrthoDB" id="6132759at2759"/>
<dbReference type="TreeFam" id="TF352855"/>
<dbReference type="Reactome" id="R-BTA-189200">
    <property type="pathway name" value="Cellular hexose transport"/>
</dbReference>
<dbReference type="Proteomes" id="UP000009136">
    <property type="component" value="Chromosome 19"/>
</dbReference>
<dbReference type="Bgee" id="ENSBTAG00000003700">
    <property type="expression patterns" value="Expressed in adult mammalian kidney and 32 other cell types or tissues"/>
</dbReference>
<dbReference type="GO" id="GO:0016324">
    <property type="term" value="C:apical plasma membrane"/>
    <property type="evidence" value="ECO:0007669"/>
    <property type="project" value="UniProtKB-SubCell"/>
</dbReference>
<dbReference type="GO" id="GO:0005886">
    <property type="term" value="C:plasma membrane"/>
    <property type="evidence" value="ECO:0000318"/>
    <property type="project" value="GO_Central"/>
</dbReference>
<dbReference type="GO" id="GO:0005412">
    <property type="term" value="F:D-glucose:sodium symporter activity"/>
    <property type="evidence" value="ECO:0000318"/>
    <property type="project" value="GO_Central"/>
</dbReference>
<dbReference type="GO" id="GO:0140930">
    <property type="term" value="F:fructose:sodium symporter activity"/>
    <property type="evidence" value="ECO:0000250"/>
    <property type="project" value="UniProtKB"/>
</dbReference>
<dbReference type="GO" id="GO:0140929">
    <property type="term" value="F:mannose:sodium symporter activity"/>
    <property type="evidence" value="ECO:0000250"/>
    <property type="project" value="UniProtKB"/>
</dbReference>
<dbReference type="FunFam" id="1.20.1730.10:FF:000004">
    <property type="entry name" value="sodium/glucose cotransporter 5 isoform X1"/>
    <property type="match status" value="1"/>
</dbReference>
<dbReference type="Gene3D" id="1.20.1730.10">
    <property type="entry name" value="Sodium/glucose cotransporter"/>
    <property type="match status" value="1"/>
</dbReference>
<dbReference type="InterPro" id="IPR038377">
    <property type="entry name" value="Na/Glc_symporter_sf"/>
</dbReference>
<dbReference type="InterPro" id="IPR001734">
    <property type="entry name" value="Na/solute_symporter"/>
</dbReference>
<dbReference type="InterPro" id="IPR018212">
    <property type="entry name" value="Na/solute_symporter_CS"/>
</dbReference>
<dbReference type="NCBIfam" id="TIGR00813">
    <property type="entry name" value="sss"/>
    <property type="match status" value="1"/>
</dbReference>
<dbReference type="PANTHER" id="PTHR11819:SF128">
    <property type="entry name" value="SODIUM_MANNOSE COTRANSPORTER SLC5A10"/>
    <property type="match status" value="1"/>
</dbReference>
<dbReference type="PANTHER" id="PTHR11819">
    <property type="entry name" value="SOLUTE CARRIER FAMILY 5"/>
    <property type="match status" value="1"/>
</dbReference>
<dbReference type="Pfam" id="PF00474">
    <property type="entry name" value="SSF"/>
    <property type="match status" value="1"/>
</dbReference>
<dbReference type="PROSITE" id="PS00457">
    <property type="entry name" value="NA_SOLUT_SYMP_2"/>
    <property type="match status" value="1"/>
</dbReference>
<dbReference type="PROSITE" id="PS50283">
    <property type="entry name" value="NA_SOLUT_SYMP_3"/>
    <property type="match status" value="1"/>
</dbReference>
<feature type="chain" id="PRO_0000311210" description="Sodium/mannose cotransporter SLC5A10">
    <location>
        <begin position="1"/>
        <end position="597"/>
    </location>
</feature>
<feature type="topological domain" description="Extracellular" evidence="3">
    <location>
        <begin position="1"/>
        <end position="16"/>
    </location>
</feature>
<feature type="transmembrane region" description="Helical" evidence="3">
    <location>
        <begin position="17"/>
        <end position="37"/>
    </location>
</feature>
<feature type="topological domain" description="Cytoplasmic" evidence="3">
    <location>
        <begin position="38"/>
        <end position="73"/>
    </location>
</feature>
<feature type="transmembrane region" description="Helical" evidence="3">
    <location>
        <begin position="74"/>
        <end position="94"/>
    </location>
</feature>
<feature type="topological domain" description="Extracellular" evidence="3">
    <location>
        <begin position="95"/>
        <end position="100"/>
    </location>
</feature>
<feature type="transmembrane region" description="Helical" evidence="3">
    <location>
        <begin position="101"/>
        <end position="121"/>
    </location>
</feature>
<feature type="topological domain" description="Cytoplasmic" evidence="3">
    <location>
        <begin position="122"/>
        <end position="139"/>
    </location>
</feature>
<feature type="transmembrane region" description="Helical" evidence="3">
    <location>
        <begin position="140"/>
        <end position="162"/>
    </location>
</feature>
<feature type="topological domain" description="Extracellular" evidence="3">
    <location>
        <begin position="163"/>
        <end position="174"/>
    </location>
</feature>
<feature type="transmembrane region" description="Helical" evidence="3">
    <location>
        <begin position="175"/>
        <end position="195"/>
    </location>
</feature>
<feature type="topological domain" description="Cytoplasmic" evidence="3">
    <location>
        <begin position="196"/>
        <end position="201"/>
    </location>
</feature>
<feature type="transmembrane region" description="Helical" evidence="3">
    <location>
        <begin position="202"/>
        <end position="222"/>
    </location>
</feature>
<feature type="topological domain" description="Extracellular" evidence="3">
    <location>
        <begin position="223"/>
        <end position="265"/>
    </location>
</feature>
<feature type="transmembrane region" description="Helical" evidence="3">
    <location>
        <begin position="266"/>
        <end position="286"/>
    </location>
</feature>
<feature type="topological domain" description="Cytoplasmic" evidence="3">
    <location>
        <begin position="287"/>
        <end position="301"/>
    </location>
</feature>
<feature type="transmembrane region" description="Helical" evidence="3">
    <location>
        <begin position="302"/>
        <end position="322"/>
    </location>
</feature>
<feature type="topological domain" description="Extracellular" evidence="3">
    <location>
        <begin position="323"/>
        <end position="367"/>
    </location>
</feature>
<feature type="transmembrane region" description="Helical" evidence="3">
    <location>
        <begin position="368"/>
        <end position="388"/>
    </location>
</feature>
<feature type="topological domain" description="Cytoplasmic" evidence="3">
    <location>
        <begin position="389"/>
        <end position="410"/>
    </location>
</feature>
<feature type="transmembrane region" description="Helical" evidence="3">
    <location>
        <begin position="411"/>
        <end position="431"/>
    </location>
</feature>
<feature type="topological domain" description="Extracellular" evidence="3">
    <location>
        <begin position="432"/>
        <end position="444"/>
    </location>
</feature>
<feature type="transmembrane region" description="Helical" evidence="3">
    <location>
        <begin position="445"/>
        <end position="465"/>
    </location>
</feature>
<feature type="topological domain" description="Cytoplasmic" evidence="3">
    <location>
        <begin position="466"/>
        <end position="472"/>
    </location>
</feature>
<feature type="transmembrane region" description="Helical" evidence="3">
    <location>
        <begin position="473"/>
        <end position="493"/>
    </location>
</feature>
<feature type="topological domain" description="Extracellular" evidence="3">
    <location>
        <begin position="494"/>
        <end position="514"/>
    </location>
</feature>
<feature type="transmembrane region" description="Helical" evidence="3">
    <location>
        <begin position="515"/>
        <end position="535"/>
    </location>
</feature>
<feature type="topological domain" description="Cytoplasmic" evidence="3">
    <location>
        <begin position="536"/>
        <end position="576"/>
    </location>
</feature>
<feature type="transmembrane region" description="Helical" evidence="3">
    <location>
        <begin position="577"/>
        <end position="597"/>
    </location>
</feature>
<feature type="glycosylation site" description="N-linked (GlcNAc...) asparagine" evidence="3">
    <location>
        <position position="5"/>
    </location>
</feature>
<feature type="glycosylation site" description="N-linked (GlcNAc...) asparagine" evidence="3">
    <location>
        <position position="97"/>
    </location>
</feature>
<accession>Q6R4Q5</accession>
<sequence length="597" mass="64726">MAVDNSTSDAHTPGRQLTVVDIAIIAVYFALNVAVGIWSSCRASRNTVRGYFLAGRDMTWWPIGASLFASSEGSGLFIGLAGSGAAGGLAVAGFEWNATYVLLALAWVFVPIYLSSEIVTMPEYMQKRYGGQRIRMYLSVLSLLLSVFTKISIDLYAGALFVHICLGWNFYLSTVIMLAITALYTIAGGLTAVIYTDALQTLVMVAGAVILTIKAFEQIGGYEQLAEAYAQAVPSRTISNTTCHVPRADAMHMFRDPYTADLPWTGMTFGLTIMAAWYWCTDQVIVQRSLSARDLNHAKGGSILASYLKMLPMGLMVMPGMISRVLFPDDVGCVVPAECLRACGAEIGCSNIAYPKLVMELMPTGLRGLMVAVMMAALMSSLTSIFNSSSTLFTMDIWRRLRPRAGERELLLVGRLVIVVLVGVSVAWIPVLQGSNGGQLFIYMQSVTSSLAPPVTAVFVLGIFWRRANEQGAFWGLMAGLAVGATRLVLEFLHPAPPCGHPDTRPPILHGVHYLHFAVALFLLSGAVVVAGSLLTPHPQGVQIQSLTWWTLAQDLPLGVKTGDGRASQRHAFWARVCGVNAILLMCVNIFFYTYFA</sequence>
<reference key="1">
    <citation type="journal article" date="2005" name="J. Dairy Sci.">
        <title>Cloning and expression of bovine sodium/glucose cotransporters.</title>
        <authorList>
            <person name="Zhao F.-Q."/>
            <person name="Zheng Y.-C."/>
            <person name="Wall E.H."/>
            <person name="McFadden T.B."/>
        </authorList>
    </citation>
    <scope>NUCLEOTIDE SEQUENCE [MRNA]</scope>
    <scope>TISSUE SPECIFICITY</scope>
    <source>
        <tissue>Kidney</tissue>
    </source>
</reference>
<keyword id="KW-1003">Cell membrane</keyword>
<keyword id="KW-0325">Glycoprotein</keyword>
<keyword id="KW-0406">Ion transport</keyword>
<keyword id="KW-0472">Membrane</keyword>
<keyword id="KW-1185">Reference proteome</keyword>
<keyword id="KW-0915">Sodium</keyword>
<keyword id="KW-0739">Sodium transport</keyword>
<keyword id="KW-0762">Sugar transport</keyword>
<keyword id="KW-0812">Transmembrane</keyword>
<keyword id="KW-1133">Transmembrane helix</keyword>
<keyword id="KW-0813">Transport</keyword>
<gene>
    <name type="primary">SLC5A10</name>
    <name type="synonym">SGLT5</name>
</gene>